<proteinExistence type="evidence at protein level"/>
<protein>
    <recommendedName>
        <fullName>Neuronal acetylcholine receptor subunit alpha-7</fullName>
        <shortName>nAChR7</shortName>
    </recommendedName>
    <alternativeName>
        <fullName>Nicotinic acetylcholine receptor subunit alpha-7</fullName>
    </alternativeName>
</protein>
<name>ACHA7_RAT</name>
<evidence type="ECO:0000250" key="1">
    <source>
        <dbReference type="UniProtKB" id="P02709"/>
    </source>
</evidence>
<evidence type="ECO:0000250" key="2">
    <source>
        <dbReference type="UniProtKB" id="P36544"/>
    </source>
</evidence>
<evidence type="ECO:0000250" key="3">
    <source>
        <dbReference type="UniProtKB" id="P49582"/>
    </source>
</evidence>
<evidence type="ECO:0000250" key="4">
    <source>
        <dbReference type="UniProtKB" id="P54131"/>
    </source>
</evidence>
<evidence type="ECO:0000255" key="5"/>
<evidence type="ECO:0000269" key="6">
    <source>
    </source>
</evidence>
<evidence type="ECO:0000269" key="7">
    <source>
    </source>
</evidence>
<evidence type="ECO:0000269" key="8">
    <source>
    </source>
</evidence>
<evidence type="ECO:0000269" key="9">
    <source>
    </source>
</evidence>
<evidence type="ECO:0000269" key="10">
    <source>
    </source>
</evidence>
<evidence type="ECO:0000269" key="11">
    <source>
    </source>
</evidence>
<evidence type="ECO:0000305" key="12"/>
<organism>
    <name type="scientific">Rattus norvegicus</name>
    <name type="common">Rat</name>
    <dbReference type="NCBI Taxonomy" id="10116"/>
    <lineage>
        <taxon>Eukaryota</taxon>
        <taxon>Metazoa</taxon>
        <taxon>Chordata</taxon>
        <taxon>Craniata</taxon>
        <taxon>Vertebrata</taxon>
        <taxon>Euteleostomi</taxon>
        <taxon>Mammalia</taxon>
        <taxon>Eutheria</taxon>
        <taxon>Euarchontoglires</taxon>
        <taxon>Glires</taxon>
        <taxon>Rodentia</taxon>
        <taxon>Myomorpha</taxon>
        <taxon>Muroidea</taxon>
        <taxon>Muridae</taxon>
        <taxon>Murinae</taxon>
        <taxon>Rattus</taxon>
    </lineage>
</organism>
<gene>
    <name type="primary">Chrna7</name>
    <name type="synonym">Acra7</name>
</gene>
<dbReference type="EMBL" id="S53987">
    <property type="protein sequence ID" value="AAB25224.2"/>
    <property type="molecule type" value="mRNA"/>
</dbReference>
<dbReference type="EMBL" id="L31619">
    <property type="protein sequence ID" value="AAC33136.1"/>
    <property type="molecule type" value="mRNA"/>
</dbReference>
<dbReference type="EMBL" id="AY574256">
    <property type="protein sequence ID" value="AAS90352.1"/>
    <property type="molecule type" value="mRNA"/>
</dbReference>
<dbReference type="PIR" id="T01378">
    <property type="entry name" value="T01378"/>
</dbReference>
<dbReference type="RefSeq" id="NP_036964.3">
    <property type="nucleotide sequence ID" value="NM_012832.4"/>
</dbReference>
<dbReference type="SMR" id="Q05941"/>
<dbReference type="ComplexPortal" id="CPX-233">
    <property type="entry name" value="Neuronal nicotinic acetylcholine receptor complex, alpha7"/>
</dbReference>
<dbReference type="ComplexPortal" id="CPX-237">
    <property type="entry name" value="Neuronal nicotinic acetylcholine receptor complex, alpha7-beta2"/>
</dbReference>
<dbReference type="FunCoup" id="Q05941">
    <property type="interactions" value="1538"/>
</dbReference>
<dbReference type="IntAct" id="Q05941">
    <property type="interactions" value="5"/>
</dbReference>
<dbReference type="MINT" id="Q05941"/>
<dbReference type="STRING" id="10116.ENSRNOP00000045255"/>
<dbReference type="BindingDB" id="Q05941"/>
<dbReference type="ChEMBL" id="CHEMBL4980"/>
<dbReference type="DrugCentral" id="Q05941"/>
<dbReference type="GuidetoPHARMACOLOGY" id="468"/>
<dbReference type="GlyCosmos" id="Q05941">
    <property type="glycosylation" value="3 sites, No reported glycans"/>
</dbReference>
<dbReference type="GlyGen" id="Q05941">
    <property type="glycosylation" value="3 sites"/>
</dbReference>
<dbReference type="iPTMnet" id="Q05941"/>
<dbReference type="PhosphoSitePlus" id="Q05941"/>
<dbReference type="SwissPalm" id="Q05941"/>
<dbReference type="PaxDb" id="10116-ENSRNOP00000045255"/>
<dbReference type="Ensembl" id="ENSRNOT00000082487.2">
    <property type="protein sequence ID" value="ENSRNOP00000073551.2"/>
    <property type="gene ID" value="ENSRNOG00000010853.8"/>
</dbReference>
<dbReference type="GeneID" id="25302"/>
<dbReference type="KEGG" id="rno:25302"/>
<dbReference type="UCSC" id="RGD:2348">
    <property type="organism name" value="rat"/>
</dbReference>
<dbReference type="AGR" id="RGD:2348"/>
<dbReference type="CTD" id="1139"/>
<dbReference type="RGD" id="2348">
    <property type="gene designation" value="Chrna7"/>
</dbReference>
<dbReference type="eggNOG" id="KOG3646">
    <property type="taxonomic scope" value="Eukaryota"/>
</dbReference>
<dbReference type="GeneTree" id="ENSGT00940000154617"/>
<dbReference type="InParanoid" id="Q05941"/>
<dbReference type="OrthoDB" id="11434at9989"/>
<dbReference type="PhylomeDB" id="Q05941"/>
<dbReference type="Reactome" id="R-RNO-629594">
    <property type="pathway name" value="Highly calcium permeable postsynaptic nicotinic acetylcholine receptors"/>
</dbReference>
<dbReference type="PRO" id="PR:Q05941"/>
<dbReference type="Proteomes" id="UP000002494">
    <property type="component" value="Chromosome 1"/>
</dbReference>
<dbReference type="GO" id="GO:0005892">
    <property type="term" value="C:acetylcholine-gated channel complex"/>
    <property type="evidence" value="ECO:0000314"/>
    <property type="project" value="ARUK-UCL"/>
</dbReference>
<dbReference type="GO" id="GO:0016324">
    <property type="term" value="C:apical plasma membrane"/>
    <property type="evidence" value="ECO:0000266"/>
    <property type="project" value="RGD"/>
</dbReference>
<dbReference type="GO" id="GO:0032279">
    <property type="term" value="C:asymmetric synapse"/>
    <property type="evidence" value="ECO:0000314"/>
    <property type="project" value="RGD"/>
</dbReference>
<dbReference type="GO" id="GO:0030673">
    <property type="term" value="C:axolemma"/>
    <property type="evidence" value="ECO:0000266"/>
    <property type="project" value="RGD"/>
</dbReference>
<dbReference type="GO" id="GO:0030424">
    <property type="term" value="C:axon"/>
    <property type="evidence" value="ECO:0000314"/>
    <property type="project" value="RGD"/>
</dbReference>
<dbReference type="GO" id="GO:0034703">
    <property type="term" value="C:cation channel complex"/>
    <property type="evidence" value="ECO:0000266"/>
    <property type="project" value="RGD"/>
</dbReference>
<dbReference type="GO" id="GO:0098981">
    <property type="term" value="C:cholinergic synapse"/>
    <property type="evidence" value="ECO:0000314"/>
    <property type="project" value="SynGO"/>
</dbReference>
<dbReference type="GO" id="GO:0030425">
    <property type="term" value="C:dendrite"/>
    <property type="evidence" value="ECO:0000314"/>
    <property type="project" value="UniProtKB"/>
</dbReference>
<dbReference type="GO" id="GO:0043198">
    <property type="term" value="C:dendritic shaft"/>
    <property type="evidence" value="ECO:0000314"/>
    <property type="project" value="RGD"/>
</dbReference>
<dbReference type="GO" id="GO:0043197">
    <property type="term" value="C:dendritic spine"/>
    <property type="evidence" value="ECO:0000314"/>
    <property type="project" value="RGD"/>
</dbReference>
<dbReference type="GO" id="GO:0005789">
    <property type="term" value="C:endoplasmic reticulum membrane"/>
    <property type="evidence" value="ECO:0000304"/>
    <property type="project" value="UniProt"/>
</dbReference>
<dbReference type="GO" id="GO:0009897">
    <property type="term" value="C:external side of plasma membrane"/>
    <property type="evidence" value="ECO:0000266"/>
    <property type="project" value="RGD"/>
</dbReference>
<dbReference type="GO" id="GO:0098690">
    <property type="term" value="C:glycinergic synapse"/>
    <property type="evidence" value="ECO:0000314"/>
    <property type="project" value="SynGO"/>
</dbReference>
<dbReference type="GO" id="GO:0030426">
    <property type="term" value="C:growth cone"/>
    <property type="evidence" value="ECO:0000314"/>
    <property type="project" value="RGD"/>
</dbReference>
<dbReference type="GO" id="GO:0016020">
    <property type="term" value="C:membrane"/>
    <property type="evidence" value="ECO:0000266"/>
    <property type="project" value="RGD"/>
</dbReference>
<dbReference type="GO" id="GO:0043005">
    <property type="term" value="C:neuron projection"/>
    <property type="evidence" value="ECO:0000318"/>
    <property type="project" value="GO_Central"/>
</dbReference>
<dbReference type="GO" id="GO:0043025">
    <property type="term" value="C:neuronal cell body"/>
    <property type="evidence" value="ECO:0000314"/>
    <property type="project" value="RGD"/>
</dbReference>
<dbReference type="GO" id="GO:0098878">
    <property type="term" value="C:neurotransmitter receptor complex"/>
    <property type="evidence" value="ECO:0000266"/>
    <property type="project" value="RGD"/>
</dbReference>
<dbReference type="GO" id="GO:0005886">
    <property type="term" value="C:plasma membrane"/>
    <property type="evidence" value="ECO:0000266"/>
    <property type="project" value="RGD"/>
</dbReference>
<dbReference type="GO" id="GO:0044853">
    <property type="term" value="C:plasma membrane raft"/>
    <property type="evidence" value="ECO:0000314"/>
    <property type="project" value="ARUK-UCL"/>
</dbReference>
<dbReference type="GO" id="GO:0045211">
    <property type="term" value="C:postsynaptic membrane"/>
    <property type="evidence" value="ECO:0000314"/>
    <property type="project" value="SynGO"/>
</dbReference>
<dbReference type="GO" id="GO:0099634">
    <property type="term" value="C:postsynaptic specialization membrane"/>
    <property type="evidence" value="ECO:0000314"/>
    <property type="project" value="SynGO"/>
</dbReference>
<dbReference type="GO" id="GO:0042734">
    <property type="term" value="C:presynaptic membrane"/>
    <property type="evidence" value="ECO:0000314"/>
    <property type="project" value="RGD"/>
</dbReference>
<dbReference type="GO" id="GO:0098897">
    <property type="term" value="C:spine apparatus membrane"/>
    <property type="evidence" value="ECO:0000314"/>
    <property type="project" value="SynGO"/>
</dbReference>
<dbReference type="GO" id="GO:0045202">
    <property type="term" value="C:synapse"/>
    <property type="evidence" value="ECO:0000318"/>
    <property type="project" value="GO_Central"/>
</dbReference>
<dbReference type="GO" id="GO:0042166">
    <property type="term" value="F:acetylcholine binding"/>
    <property type="evidence" value="ECO:0000314"/>
    <property type="project" value="RGD"/>
</dbReference>
<dbReference type="GO" id="GO:0015464">
    <property type="term" value="F:acetylcholine receptor activity"/>
    <property type="evidence" value="ECO:0000266"/>
    <property type="project" value="RGD"/>
</dbReference>
<dbReference type="GO" id="GO:0022848">
    <property type="term" value="F:acetylcholine-gated monoatomic cation-selective channel activity"/>
    <property type="evidence" value="ECO:0000314"/>
    <property type="project" value="UniProtKB"/>
</dbReference>
<dbReference type="GO" id="GO:0008179">
    <property type="term" value="F:adenylate cyclase binding"/>
    <property type="evidence" value="ECO:0000353"/>
    <property type="project" value="RGD"/>
</dbReference>
<dbReference type="GO" id="GO:0001540">
    <property type="term" value="F:amyloid-beta binding"/>
    <property type="evidence" value="ECO:0000266"/>
    <property type="project" value="RGD"/>
</dbReference>
<dbReference type="GO" id="GO:0051117">
    <property type="term" value="F:ATPase binding"/>
    <property type="evidence" value="ECO:0000314"/>
    <property type="project" value="RGD"/>
</dbReference>
<dbReference type="GO" id="GO:0017081">
    <property type="term" value="F:chloride channel regulator activity"/>
    <property type="evidence" value="ECO:0000266"/>
    <property type="project" value="RGD"/>
</dbReference>
<dbReference type="GO" id="GO:0005216">
    <property type="term" value="F:monoatomic ion channel activity"/>
    <property type="evidence" value="ECO:0000266"/>
    <property type="project" value="RGD"/>
</dbReference>
<dbReference type="GO" id="GO:0042803">
    <property type="term" value="F:protein homodimerization activity"/>
    <property type="evidence" value="ECO:0000266"/>
    <property type="project" value="RGD"/>
</dbReference>
<dbReference type="GO" id="GO:0019901">
    <property type="term" value="F:protein kinase binding"/>
    <property type="evidence" value="ECO:0000353"/>
    <property type="project" value="RGD"/>
</dbReference>
<dbReference type="GO" id="GO:0097110">
    <property type="term" value="F:scaffold protein binding"/>
    <property type="evidence" value="ECO:0000314"/>
    <property type="project" value="RGD"/>
</dbReference>
<dbReference type="GO" id="GO:0015643">
    <property type="term" value="F:toxic substance binding"/>
    <property type="evidence" value="ECO:0000266"/>
    <property type="project" value="RGD"/>
</dbReference>
<dbReference type="GO" id="GO:0004888">
    <property type="term" value="F:transmembrane signaling receptor activity"/>
    <property type="evidence" value="ECO:0000266"/>
    <property type="project" value="RGD"/>
</dbReference>
<dbReference type="GO" id="GO:1904315">
    <property type="term" value="F:transmitter-gated monoatomic ion channel activity involved in regulation of postsynaptic membrane potential"/>
    <property type="evidence" value="ECO:0000314"/>
    <property type="project" value="SynGO"/>
</dbReference>
<dbReference type="GO" id="GO:0095500">
    <property type="term" value="P:acetylcholine receptor signaling pathway"/>
    <property type="evidence" value="ECO:0000314"/>
    <property type="project" value="ARUK-UCL"/>
</dbReference>
<dbReference type="GO" id="GO:0008306">
    <property type="term" value="P:associative learning"/>
    <property type="evidence" value="ECO:0000266"/>
    <property type="project" value="RGD"/>
</dbReference>
<dbReference type="GO" id="GO:0042113">
    <property type="term" value="P:B cell activation"/>
    <property type="evidence" value="ECO:0000266"/>
    <property type="project" value="RGD"/>
</dbReference>
<dbReference type="GO" id="GO:0048149">
    <property type="term" value="P:behavioral response to ethanol"/>
    <property type="evidence" value="ECO:0000266"/>
    <property type="project" value="RGD"/>
</dbReference>
<dbReference type="GO" id="GO:0035095">
    <property type="term" value="P:behavioral response to nicotine"/>
    <property type="evidence" value="ECO:0000266"/>
    <property type="project" value="RGD"/>
</dbReference>
<dbReference type="GO" id="GO:0006816">
    <property type="term" value="P:calcium ion transport"/>
    <property type="evidence" value="ECO:0000314"/>
    <property type="project" value="UniProtKB"/>
</dbReference>
<dbReference type="GO" id="GO:0007268">
    <property type="term" value="P:chemical synaptic transmission"/>
    <property type="evidence" value="ECO:0000266"/>
    <property type="project" value="RGD"/>
</dbReference>
<dbReference type="GO" id="GO:0050890">
    <property type="term" value="P:cognition"/>
    <property type="evidence" value="ECO:0000266"/>
    <property type="project" value="RGD"/>
</dbReference>
<dbReference type="GO" id="GO:0140059">
    <property type="term" value="P:dendrite arborization"/>
    <property type="evidence" value="ECO:0000266"/>
    <property type="project" value="RGD"/>
</dbReference>
<dbReference type="GO" id="GO:0097061">
    <property type="term" value="P:dendritic spine organization"/>
    <property type="evidence" value="ECO:0000266"/>
    <property type="project" value="RGD"/>
</dbReference>
<dbReference type="GO" id="GO:0042416">
    <property type="term" value="P:dopamine biosynthetic process"/>
    <property type="evidence" value="ECO:0000270"/>
    <property type="project" value="RGD"/>
</dbReference>
<dbReference type="GO" id="GO:0006897">
    <property type="term" value="P:endocytosis"/>
    <property type="evidence" value="ECO:0000266"/>
    <property type="project" value="RGD"/>
</dbReference>
<dbReference type="GO" id="GO:0051649">
    <property type="term" value="P:establishment of localization in cell"/>
    <property type="evidence" value="ECO:0000266"/>
    <property type="project" value="RGD"/>
</dbReference>
<dbReference type="GO" id="GO:0060079">
    <property type="term" value="P:excitatory postsynaptic potential"/>
    <property type="evidence" value="ECO:0000266"/>
    <property type="project" value="RGD"/>
</dbReference>
<dbReference type="GO" id="GO:0030317">
    <property type="term" value="P:flagellated sperm motility"/>
    <property type="evidence" value="ECO:0000266"/>
    <property type="project" value="RGD"/>
</dbReference>
<dbReference type="GO" id="GO:0060112">
    <property type="term" value="P:generation of ovulation cycle rhythm"/>
    <property type="evidence" value="ECO:0000266"/>
    <property type="project" value="RGD"/>
</dbReference>
<dbReference type="GO" id="GO:0006874">
    <property type="term" value="P:intracellular calcium ion homeostasis"/>
    <property type="evidence" value="ECO:0000266"/>
    <property type="project" value="RGD"/>
</dbReference>
<dbReference type="GO" id="GO:0007611">
    <property type="term" value="P:learning or memory"/>
    <property type="evidence" value="ECO:0000315"/>
    <property type="project" value="RGD"/>
</dbReference>
<dbReference type="GO" id="GO:1990806">
    <property type="term" value="P:ligand-gated ion channel signaling pathway"/>
    <property type="evidence" value="ECO:0000314"/>
    <property type="project" value="UniProt"/>
</dbReference>
<dbReference type="GO" id="GO:0007613">
    <property type="term" value="P:memory"/>
    <property type="evidence" value="ECO:0000314"/>
    <property type="project" value="ARUK-UCL"/>
</dbReference>
<dbReference type="GO" id="GO:0050804">
    <property type="term" value="P:modulation of chemical synaptic transmission"/>
    <property type="evidence" value="ECO:0000266"/>
    <property type="project" value="RGD"/>
</dbReference>
<dbReference type="GO" id="GO:0098815">
    <property type="term" value="P:modulation of excitatory postsynaptic potential"/>
    <property type="evidence" value="ECO:0000266"/>
    <property type="project" value="RGD"/>
</dbReference>
<dbReference type="GO" id="GO:0034220">
    <property type="term" value="P:monoatomic ion transmembrane transport"/>
    <property type="evidence" value="ECO:0000314"/>
    <property type="project" value="RGD"/>
</dbReference>
<dbReference type="GO" id="GO:0006811">
    <property type="term" value="P:monoatomic ion transport"/>
    <property type="evidence" value="ECO:0000266"/>
    <property type="project" value="RGD"/>
</dbReference>
<dbReference type="GO" id="GO:1902430">
    <property type="term" value="P:negative regulation of amyloid-beta formation"/>
    <property type="evidence" value="ECO:0000266"/>
    <property type="project" value="RGD"/>
</dbReference>
<dbReference type="GO" id="GO:0043124">
    <property type="term" value="P:negative regulation of canonical NF-kappaB signal transduction"/>
    <property type="evidence" value="ECO:0000266"/>
    <property type="project" value="RGD"/>
</dbReference>
<dbReference type="GO" id="GO:1900016">
    <property type="term" value="P:negative regulation of cytokine production involved in inflammatory response"/>
    <property type="evidence" value="ECO:0000250"/>
    <property type="project" value="UniProtKB"/>
</dbReference>
<dbReference type="GO" id="GO:0070373">
    <property type="term" value="P:negative regulation of ERK1 and ERK2 cascade"/>
    <property type="evidence" value="ECO:0000315"/>
    <property type="project" value="RGD"/>
</dbReference>
<dbReference type="GO" id="GO:0050728">
    <property type="term" value="P:negative regulation of inflammatory response"/>
    <property type="evidence" value="ECO:0000266"/>
    <property type="project" value="RGD"/>
</dbReference>
<dbReference type="GO" id="GO:0032691">
    <property type="term" value="P:negative regulation of interleukin-1 beta production"/>
    <property type="evidence" value="ECO:0000266"/>
    <property type="project" value="RGD"/>
</dbReference>
<dbReference type="GO" id="GO:0032715">
    <property type="term" value="P:negative regulation of interleukin-6 production"/>
    <property type="evidence" value="ECO:0000266"/>
    <property type="project" value="RGD"/>
</dbReference>
<dbReference type="GO" id="GO:0032720">
    <property type="term" value="P:negative regulation of tumor necrosis factor production"/>
    <property type="evidence" value="ECO:0000250"/>
    <property type="project" value="UniProtKB"/>
</dbReference>
<dbReference type="GO" id="GO:0019228">
    <property type="term" value="P:neuronal action potential"/>
    <property type="evidence" value="ECO:0000315"/>
    <property type="project" value="RGD"/>
</dbReference>
<dbReference type="GO" id="GO:0042698">
    <property type="term" value="P:ovulation cycle"/>
    <property type="evidence" value="ECO:0000266"/>
    <property type="project" value="RGD"/>
</dbReference>
<dbReference type="GO" id="GO:1902004">
    <property type="term" value="P:positive regulation of amyloid-beta formation"/>
    <property type="evidence" value="ECO:0000266"/>
    <property type="project" value="RGD"/>
</dbReference>
<dbReference type="GO" id="GO:0045766">
    <property type="term" value="P:positive regulation of angiogenesis"/>
    <property type="evidence" value="ECO:0000266"/>
    <property type="project" value="RGD"/>
</dbReference>
<dbReference type="GO" id="GO:0008284">
    <property type="term" value="P:positive regulation of cell population proliferation"/>
    <property type="evidence" value="ECO:0000266"/>
    <property type="project" value="RGD"/>
</dbReference>
<dbReference type="GO" id="GO:0070374">
    <property type="term" value="P:positive regulation of ERK1 and ERK2 cascade"/>
    <property type="evidence" value="ECO:0000314"/>
    <property type="project" value="ARUK-UCL"/>
</dbReference>
<dbReference type="GO" id="GO:2000463">
    <property type="term" value="P:positive regulation of excitatory postsynaptic potential"/>
    <property type="evidence" value="ECO:0000266"/>
    <property type="project" value="RGD"/>
</dbReference>
<dbReference type="GO" id="GO:0010628">
    <property type="term" value="P:positive regulation of gene expression"/>
    <property type="evidence" value="ECO:0000314"/>
    <property type="project" value="RGD"/>
</dbReference>
<dbReference type="GO" id="GO:0001988">
    <property type="term" value="P:positive regulation of heart rate involved in baroreceptor response to decreased systemic arterial blood pressure"/>
    <property type="evidence" value="ECO:0000266"/>
    <property type="project" value="RGD"/>
</dbReference>
<dbReference type="GO" id="GO:1900273">
    <property type="term" value="P:positive regulation of long-term synaptic potentiation"/>
    <property type="evidence" value="ECO:0000266"/>
    <property type="project" value="RGD"/>
</dbReference>
<dbReference type="GO" id="GO:0043410">
    <property type="term" value="P:positive regulation of MAPK cascade"/>
    <property type="evidence" value="ECO:0000266"/>
    <property type="project" value="RGD"/>
</dbReference>
<dbReference type="GO" id="GO:0051247">
    <property type="term" value="P:positive regulation of protein metabolic process"/>
    <property type="evidence" value="ECO:0000266"/>
    <property type="project" value="RGD"/>
</dbReference>
<dbReference type="GO" id="GO:0099171">
    <property type="term" value="P:presynaptic modulation of chemical synaptic transmission"/>
    <property type="evidence" value="ECO:0000314"/>
    <property type="project" value="SynGO"/>
</dbReference>
<dbReference type="GO" id="GO:1905906">
    <property type="term" value="P:regulation of amyloid fibril formation"/>
    <property type="evidence" value="ECO:0000266"/>
    <property type="project" value="RGD"/>
</dbReference>
<dbReference type="GO" id="GO:1902991">
    <property type="term" value="P:regulation of amyloid precursor protein catabolic process"/>
    <property type="evidence" value="ECO:0000266"/>
    <property type="project" value="RGD"/>
</dbReference>
<dbReference type="GO" id="GO:0050727">
    <property type="term" value="P:regulation of inflammatory response"/>
    <property type="evidence" value="ECO:0000266"/>
    <property type="project" value="RGD"/>
</dbReference>
<dbReference type="GO" id="GO:0042391">
    <property type="term" value="P:regulation of membrane potential"/>
    <property type="evidence" value="ECO:0000314"/>
    <property type="project" value="MGI"/>
</dbReference>
<dbReference type="GO" id="GO:0014061">
    <property type="term" value="P:regulation of norepinephrine secretion"/>
    <property type="evidence" value="ECO:0000266"/>
    <property type="project" value="RGD"/>
</dbReference>
<dbReference type="GO" id="GO:2001023">
    <property type="term" value="P:regulation of response to drug"/>
    <property type="evidence" value="ECO:0000314"/>
    <property type="project" value="RGD"/>
</dbReference>
<dbReference type="GO" id="GO:0051823">
    <property type="term" value="P:regulation of synapse structural plasticity"/>
    <property type="evidence" value="ECO:0000266"/>
    <property type="project" value="RGD"/>
</dbReference>
<dbReference type="GO" id="GO:0032225">
    <property type="term" value="P:regulation of synaptic transmission, dopaminergic"/>
    <property type="evidence" value="ECO:0000266"/>
    <property type="project" value="RGD"/>
</dbReference>
<dbReference type="GO" id="GO:1905144">
    <property type="term" value="P:response to acetylcholine"/>
    <property type="evidence" value="ECO:0000314"/>
    <property type="project" value="ARUK-UCL"/>
</dbReference>
<dbReference type="GO" id="GO:1904645">
    <property type="term" value="P:response to amyloid-beta"/>
    <property type="evidence" value="ECO:0000266"/>
    <property type="project" value="RGD"/>
</dbReference>
<dbReference type="GO" id="GO:0046681">
    <property type="term" value="P:response to carbamate"/>
    <property type="evidence" value="ECO:0000270"/>
    <property type="project" value="RGD"/>
</dbReference>
<dbReference type="GO" id="GO:0009409">
    <property type="term" value="P:response to cold"/>
    <property type="evidence" value="ECO:0000266"/>
    <property type="project" value="RGD"/>
</dbReference>
<dbReference type="GO" id="GO:0045471">
    <property type="term" value="P:response to ethanol"/>
    <property type="evidence" value="ECO:0000270"/>
    <property type="project" value="RGD"/>
</dbReference>
<dbReference type="GO" id="GO:0032094">
    <property type="term" value="P:response to food"/>
    <property type="evidence" value="ECO:0000266"/>
    <property type="project" value="RGD"/>
</dbReference>
<dbReference type="GO" id="GO:0001666">
    <property type="term" value="P:response to hypoxia"/>
    <property type="evidence" value="ECO:0000266"/>
    <property type="project" value="RGD"/>
</dbReference>
<dbReference type="GO" id="GO:0035094">
    <property type="term" value="P:response to nicotine"/>
    <property type="evidence" value="ECO:0000314"/>
    <property type="project" value="RGD"/>
</dbReference>
<dbReference type="GO" id="GO:0050893">
    <property type="term" value="P:sensory processing"/>
    <property type="evidence" value="ECO:0000314"/>
    <property type="project" value="ARUK-UCL"/>
</dbReference>
<dbReference type="GO" id="GO:0007165">
    <property type="term" value="P:signal transduction"/>
    <property type="evidence" value="ECO:0000266"/>
    <property type="project" value="RGD"/>
</dbReference>
<dbReference type="GO" id="GO:0050808">
    <property type="term" value="P:synapse organization"/>
    <property type="evidence" value="ECO:0000266"/>
    <property type="project" value="RGD"/>
</dbReference>
<dbReference type="GO" id="GO:0060084">
    <property type="term" value="P:synaptic transmission involved in micturition"/>
    <property type="evidence" value="ECO:0000314"/>
    <property type="project" value="UniProt"/>
</dbReference>
<dbReference type="GO" id="GO:0007271">
    <property type="term" value="P:synaptic transmission, cholinergic"/>
    <property type="evidence" value="ECO:0000314"/>
    <property type="project" value="UniProtKB"/>
</dbReference>
<dbReference type="GO" id="GO:0042110">
    <property type="term" value="P:T cell activation"/>
    <property type="evidence" value="ECO:0000266"/>
    <property type="project" value="RGD"/>
</dbReference>
<dbReference type="CDD" id="cd19020">
    <property type="entry name" value="LGIC_ECD_nAChR_A7"/>
    <property type="match status" value="1"/>
</dbReference>
<dbReference type="CDD" id="cd19051">
    <property type="entry name" value="LGIC_TM_cation"/>
    <property type="match status" value="1"/>
</dbReference>
<dbReference type="FunFam" id="1.20.58.390:FF:000007">
    <property type="entry name" value="Neuronal acetylcholine receptor subunit alpha-7"/>
    <property type="match status" value="1"/>
</dbReference>
<dbReference type="FunFam" id="2.70.170.10:FF:000009">
    <property type="entry name" value="Neuronal acetylcholine receptor subunit alpha-7"/>
    <property type="match status" value="1"/>
</dbReference>
<dbReference type="FunFam" id="1.20.58.390:FF:000011">
    <property type="entry name" value="neuronal acetylcholine receptor subunit alpha-7"/>
    <property type="match status" value="1"/>
</dbReference>
<dbReference type="Gene3D" id="2.70.170.10">
    <property type="entry name" value="Neurotransmitter-gated ion-channel ligand-binding domain"/>
    <property type="match status" value="1"/>
</dbReference>
<dbReference type="Gene3D" id="1.20.58.390">
    <property type="entry name" value="Neurotransmitter-gated ion-channel transmembrane domain"/>
    <property type="match status" value="2"/>
</dbReference>
<dbReference type="InterPro" id="IPR006202">
    <property type="entry name" value="Neur_chan_lig-bd"/>
</dbReference>
<dbReference type="InterPro" id="IPR036734">
    <property type="entry name" value="Neur_chan_lig-bd_sf"/>
</dbReference>
<dbReference type="InterPro" id="IPR006201">
    <property type="entry name" value="Neur_channel"/>
</dbReference>
<dbReference type="InterPro" id="IPR036719">
    <property type="entry name" value="Neuro-gated_channel_TM_sf"/>
</dbReference>
<dbReference type="InterPro" id="IPR038050">
    <property type="entry name" value="Neuro_actylchol_rec"/>
</dbReference>
<dbReference type="InterPro" id="IPR006029">
    <property type="entry name" value="Neurotrans-gated_channel_TM"/>
</dbReference>
<dbReference type="InterPro" id="IPR018000">
    <property type="entry name" value="Neurotransmitter_ion_chnl_CS"/>
</dbReference>
<dbReference type="InterPro" id="IPR002394">
    <property type="entry name" value="Nicotinic_acetylcholine_rcpt"/>
</dbReference>
<dbReference type="NCBIfam" id="TIGR00860">
    <property type="entry name" value="LIC"/>
    <property type="match status" value="1"/>
</dbReference>
<dbReference type="PANTHER" id="PTHR18945">
    <property type="entry name" value="NEUROTRANSMITTER GATED ION CHANNEL"/>
    <property type="match status" value="1"/>
</dbReference>
<dbReference type="Pfam" id="PF02931">
    <property type="entry name" value="Neur_chan_LBD"/>
    <property type="match status" value="1"/>
</dbReference>
<dbReference type="Pfam" id="PF02932">
    <property type="entry name" value="Neur_chan_memb"/>
    <property type="match status" value="1"/>
</dbReference>
<dbReference type="PRINTS" id="PR00254">
    <property type="entry name" value="NICOTINICR"/>
</dbReference>
<dbReference type="PRINTS" id="PR00252">
    <property type="entry name" value="NRIONCHANNEL"/>
</dbReference>
<dbReference type="SUPFAM" id="SSF90112">
    <property type="entry name" value="Neurotransmitter-gated ion-channel transmembrane pore"/>
    <property type="match status" value="1"/>
</dbReference>
<dbReference type="SUPFAM" id="SSF63712">
    <property type="entry name" value="Nicotinic receptor ligand binding domain-like"/>
    <property type="match status" value="1"/>
</dbReference>
<dbReference type="PROSITE" id="PS00236">
    <property type="entry name" value="NEUROTR_ION_CHANNEL"/>
    <property type="match status" value="1"/>
</dbReference>
<sequence length="502" mass="56503">MCGGRGGIWLALAAALLHVSLQGEFQRRLYKELVKNYNPLERPVANDSQPLTVYFSLSLLQIMDVDEKNQVLTTNIWLQMSWTDHYLQWNMSEYPGVKNVRFPDGQIWKPDILLYNSADERFDATFHTNVLVNASGHCQYLPPGIFKSSCYIDVRWFPFDVQQCKLKFGSWSYGGWSLDLQMQEADISSYIPNGEWDLMGIPGKRNEKFYECCKEPYPDVTYTVTMRRRTLYYGLNLLIPCVLISALALLVFLLPADSGEKISLGITVLLSLTVFMLLVAEIMPATSDSVPLIAQYFASTMIIVGLSVVVTVIVLRYHHHDPDGGKMPKWTRIILLNWCAWFLRMKRPGEDKVRPACQHKPRRCSLASVELSAGAGPPTSNGNLLYIGFRGLEGMHCAPTPDSGVVCGRLACSPTHDEHLMHGAHPSDGDPDLAKILEEVRYIANRFRCQDESEVICSEWKFAACVVDRLCLMAFSVFTIICTIGILMSAPNFVEAVSKDFA</sequence>
<feature type="signal peptide" evidence="5">
    <location>
        <begin position="1"/>
        <end position="22"/>
    </location>
</feature>
<feature type="chain" id="PRO_0000000369" description="Neuronal acetylcholine receptor subunit alpha-7">
    <location>
        <begin position="23"/>
        <end position="502"/>
    </location>
</feature>
<feature type="topological domain" description="Extracellular" evidence="5">
    <location>
        <begin position="23"/>
        <end position="233"/>
    </location>
</feature>
<feature type="transmembrane region" description="Helical" evidence="5">
    <location>
        <begin position="234"/>
        <end position="254"/>
    </location>
</feature>
<feature type="transmembrane region" description="Helical" evidence="5">
    <location>
        <begin position="262"/>
        <end position="282"/>
    </location>
</feature>
<feature type="transmembrane region" description="Helical" evidence="5">
    <location>
        <begin position="295"/>
        <end position="315"/>
    </location>
</feature>
<feature type="topological domain" description="Cytoplasmic" evidence="5">
    <location>
        <begin position="316"/>
        <end position="469"/>
    </location>
</feature>
<feature type="transmembrane region" description="Helical" evidence="5">
    <location>
        <begin position="470"/>
        <end position="490"/>
    </location>
</feature>
<feature type="region of interest" description="Essential for TMEM35A/NACHO-mediated proper subunit assembly and trafficking to cell membrane" evidence="3">
    <location>
        <begin position="260"/>
        <end position="267"/>
    </location>
</feature>
<feature type="binding site" evidence="2">
    <location>
        <position position="42"/>
    </location>
    <ligand>
        <name>Ca(2+)</name>
        <dbReference type="ChEBI" id="CHEBI:29108"/>
    </ligand>
</feature>
<feature type="binding site" evidence="2">
    <location>
        <position position="44"/>
    </location>
    <ligand>
        <name>Ca(2+)</name>
        <dbReference type="ChEBI" id="CHEBI:29108"/>
    </ligand>
</feature>
<feature type="binding site" evidence="2">
    <location>
        <position position="172"/>
    </location>
    <ligand>
        <name>Ca(2+)</name>
        <dbReference type="ChEBI" id="CHEBI:29108"/>
    </ligand>
</feature>
<feature type="binding site" evidence="2">
    <location>
        <position position="210"/>
    </location>
    <ligand>
        <name>Ca(2+)</name>
        <dbReference type="ChEBI" id="CHEBI:29108"/>
    </ligand>
</feature>
<feature type="glycosylation site" description="N-linked (GlcNAc...) asparagine" evidence="5">
    <location>
        <position position="46"/>
    </location>
</feature>
<feature type="glycosylation site" description="N-linked (GlcNAc...) asparagine" evidence="5">
    <location>
        <position position="90"/>
    </location>
</feature>
<feature type="glycosylation site" description="N-linked (GlcNAc...) asparagine" evidence="5">
    <location>
        <position position="133"/>
    </location>
</feature>
<feature type="disulfide bond" evidence="2">
    <location>
        <begin position="150"/>
        <end position="164"/>
    </location>
</feature>
<feature type="disulfide bond" description="Associated with receptor activation" evidence="2">
    <location>
        <begin position="212"/>
        <end position="213"/>
    </location>
</feature>
<feature type="mutagenesis site" description="10-fold more potently inhibited by the alpha-conotoxin RgIA." evidence="11">
    <original>S</original>
    <variation>T</variation>
    <location>
        <position position="81"/>
    </location>
</feature>
<feature type="mutagenesis site" description="No change in inhibition by the alpha-conotoxin RgIA." evidence="11">
    <original>L</original>
    <variation>D</variation>
    <location>
        <position position="141"/>
    </location>
</feature>
<feature type="mutagenesis site" description="Abolishes dependency on RIC3 for functional expression." evidence="6">
    <original>L</original>
    <variation>A</variation>
    <location>
        <position position="433"/>
    </location>
</feature>
<feature type="mutagenesis site" description="No effect on dependency on RIC3 for functional expression." evidence="6">
    <original>K</original>
    <variation>A</variation>
    <location>
        <position position="435"/>
    </location>
</feature>
<feature type="mutagenesis site" description="Impairs dependency on RIC3 for functional expression." evidence="6">
    <original>V</original>
    <variation>A</variation>
    <location>
        <position position="440"/>
    </location>
</feature>
<feature type="mutagenesis site" description="Slightly impairs dependency on RIC3 for functional expression." evidence="6">
    <original>N</original>
    <variation>A</variation>
    <location>
        <position position="445"/>
    </location>
</feature>
<feature type="mutagenesis site" description="Impairs dependency on RIC3 for functional expression." evidence="6">
    <original>R</original>
    <variation>A</variation>
    <location>
        <position position="446"/>
    </location>
</feature>
<feature type="mutagenesis site" description="Impairs dependency on RIC3 for functional expression." evidence="6">
    <original>F</original>
    <variation>A</variation>
    <location>
        <position position="447"/>
    </location>
</feature>
<feature type="mutagenesis site" description="Impairs dependency on RIC3 for functional expression." evidence="6">
    <original>R</original>
    <variation>A</variation>
    <location>
        <position position="448"/>
    </location>
</feature>
<feature type="sequence conflict" description="In Ref. 1; AAB25224." evidence="12" ref="1">
    <original>F</original>
    <variation>N</variation>
    <location>
        <position position="447"/>
    </location>
</feature>
<feature type="sequence conflict" description="In Ref. 1; AAB25224." evidence="12" ref="1">
    <original>R</original>
    <variation>P</variation>
    <location>
        <position position="469"/>
    </location>
</feature>
<comment type="function">
    <text evidence="2 8 9 10">Component of neuronal acetylcholine receptors (nAChRs) that function as pentameric, ligand-gated cation channels with high calcium permeability among other activities. nAChRs are excitatory neurotrasnmitter receptors formed by a collection of nAChR subunits known to mediate synaptic transmission in the nervous system and the neuromuscular junction. Each nAchR subunit confers differential attributes to channel properties, including activation, deactivation and desensitization kinetics, pH sensitivity, cation permeability, and binding to allosteric modulators (PubMed:17510177). CHRNA7 forms homopentameric neuronal acetylcholine receptors abundantly expressed in the central nervous system, characterized by fast desensitization and high calcium permeability. Also forms heteropentamers with CHRNB2, mainly expressed in basal forebrain cholinergic neurons (By similarity). Involved in the modulation of calcium-dependent signaling pathways and influences the release of neurotransmitters, including dopamine, glutamate and GABA (PubMed:17510177). Also expressed in non-neuronal cells such as immune cells like lymphocytes, monocytes and macrophages. In T cells, activation induces metabotropic signaling that results in an increase of intracellular Ca2+ concentrations, independent of ionotropic receptor functions (PubMed:17709503). In macrophages, required for acetylcholine-mediated inhibition of TNF and other inflammatory cytokine release. Once activated by acetylcholine, nicotine or other agonists, selectively inhibits production of pro-inflammatory cytokines while leaving anti-inflammatory cytokines undisturbed. Stimulates the cholinergic anti-inflammatory pathway, controlling inflammation by inhibiting NFKB nuclear translocation and activating the JAK2-STAT3 pathway, independently of ion channel activity (By similarity). Also expressed in the urothelium where it modulates reflex bladder activity by increasing intracellular calcium through internal stores and decreasing basal ATP release (PubMed:22250215).</text>
</comment>
<comment type="catalytic activity">
    <reaction evidence="8">
        <text>Ca(2+)(in) = Ca(2+)(out)</text>
        <dbReference type="Rhea" id="RHEA:29671"/>
        <dbReference type="ChEBI" id="CHEBI:29108"/>
    </reaction>
</comment>
<comment type="catalytic activity">
    <reaction evidence="1">
        <text>K(+)(in) = K(+)(out)</text>
        <dbReference type="Rhea" id="RHEA:29463"/>
        <dbReference type="ChEBI" id="CHEBI:29103"/>
    </reaction>
</comment>
<comment type="catalytic activity">
    <reaction evidence="1">
        <text>Na(+)(in) = Na(+)(out)</text>
        <dbReference type="Rhea" id="RHEA:34963"/>
        <dbReference type="ChEBI" id="CHEBI:29101"/>
    </reaction>
</comment>
<comment type="catalytic activity">
    <reaction evidence="2">
        <text>choline(out) = choline(in)</text>
        <dbReference type="Rhea" id="RHEA:32751"/>
        <dbReference type="ChEBI" id="CHEBI:15354"/>
    </reaction>
</comment>
<comment type="catalytic activity">
    <reaction evidence="2">
        <text>NH4(+)(in) = NH4(+)(out)</text>
        <dbReference type="Rhea" id="RHEA:28747"/>
        <dbReference type="ChEBI" id="CHEBI:28938"/>
    </reaction>
</comment>
<comment type="catalytic activity">
    <reaction evidence="2">
        <text>L-arginine(in) = L-arginine(out)</text>
        <dbReference type="Rhea" id="RHEA:32143"/>
        <dbReference type="ChEBI" id="CHEBI:32682"/>
    </reaction>
</comment>
<comment type="catalytic activity">
    <reaction>
        <text>guanidine(out) = guanidine(in)</text>
        <dbReference type="Rhea" id="RHEA:73883"/>
        <dbReference type="ChEBI" id="CHEBI:30087"/>
    </reaction>
</comment>
<comment type="activity regulation">
    <text evidence="2 8 10 11">Activated by a myriad of ligands such as acetylcholine, cytisine, nicotine, choline and epibatidine (PubMed:17510177, PubMed:22250215). Oligomeric amyloid-beta protein 42 activates specifially CHRNA7:CHRNB2 nAchRs. Activity is modulated by positive allosteric modulators (PAMs), such as flavonoids, with a wide range of chemical diversity, pharmacological sensitivity and efficacy. AChR activity is inhibited by the antagonists alpha-conotoxons RgIA, ImI and ImII, small disulfide-constrained peptides from cone snails (PubMed:25740413). Alpha-conotoxin PnIC selectively inhibits CHRNA7:CHRNB2 over CHRNA7 homopentamer (By similarity).</text>
</comment>
<comment type="subunit">
    <text evidence="2 4 6 7 11">Homopentamer. Can also form heteropentamers with CHRNB2, mainly found in basal forebrain cholinergic neurons (By similarity). Interacts with RIC3; which is required for proper folding and assembly (PubMed:15927954, PubMed:16120769). Interacts with LYPD6 (By similarity). Interacts with CANX (By similarity).</text>
</comment>
<comment type="interaction">
    <interactant intactId="EBI-79422">
        <id>Q05941</id>
    </interactant>
    <interactant intactId="EBI-821758">
        <id>PRO_0000000092</id>
        <label>APP</label>
        <dbReference type="UniProtKB" id="P05067"/>
    </interactant>
    <organismsDiffer>true</organismsDiffer>
    <experiments>3</experiments>
</comment>
<comment type="interaction">
    <interactant intactId="EBI-79422">
        <id>Q05941</id>
    </interactant>
    <interactant intactId="EBI-11152848">
        <id>Q7Z2K8</id>
        <label>GPRIN1</label>
    </interactant>
    <organismsDiffer>true</organismsDiffer>
    <experiments>6</experiments>
</comment>
<comment type="interaction">
    <interactant intactId="EBI-79422">
        <id>Q05941</id>
    </interactant>
    <interactant intactId="EBI-7516391">
        <id>P60615</id>
    </interactant>
    <organismsDiffer>true</organismsDiffer>
    <experiments>4</experiments>
</comment>
<comment type="subcellular location">
    <subcellularLocation>
        <location evidence="8">Postsynaptic cell membrane</location>
        <topology evidence="5">Multi-pass membrane protein</topology>
    </subcellularLocation>
    <subcellularLocation>
        <location evidence="6">Cell membrane</location>
        <topology evidence="5">Multi-pass membrane protein</topology>
    </subcellularLocation>
    <text evidence="3 6">RIC3 promotes its trafficking to the cell membrane (PubMed:15927954). TMEM35A/NACHO promotes its trafficking to the cell membrane (By similarity).</text>
</comment>
<comment type="tissue specificity">
    <text evidence="8 10">Expressed in neurons (PubMed:17510177). Expressed in umbrella cells of urothelium (at protein level) (PubMed:22250215).</text>
</comment>
<comment type="PTM">
    <text evidence="3">Glycosylations at Asn-46, Asn-90 and Asn-133 are essential for TMEM35A/NACHO-mediated proper subunit assembly and trafficking to the cell membrane.</text>
</comment>
<comment type="similarity">
    <text evidence="12">Belongs to the ligand-gated ion channel (TC 1.A.9) family. Acetylcholine receptor (TC 1.A.9.1) subfamily. Alpha-7/CHRNA7 sub-subfamily.</text>
</comment>
<reference key="1">
    <citation type="journal article" date="1993" name="J. Neurosci.">
        <title>Molecular cloning, functional properties, and distribution of rat brain alpha 7: a nicotinic cation channel highly permeable to calcium.</title>
        <authorList>
            <person name="Seguela P."/>
            <person name="Wadiche J."/>
            <person name="Dineley-Miller K."/>
            <person name="Dani J.A."/>
            <person name="Patrick J.W."/>
        </authorList>
    </citation>
    <scope>NUCLEOTIDE SEQUENCE [MRNA]</scope>
    <source>
        <tissue>Brain</tissue>
    </source>
</reference>
<reference key="2">
    <citation type="submission" date="1994-04" db="EMBL/GenBank/DDBJ databases">
        <authorList>
            <person name="Boulter J."/>
        </authorList>
    </citation>
    <scope>NUCLEOTIDE SEQUENCE [MRNA]</scope>
    <source>
        <strain>Sprague-Dawley</strain>
        <tissue>Brain</tissue>
    </source>
</reference>
<reference key="3">
    <citation type="submission" date="1998-08" db="EMBL/GenBank/DDBJ databases">
        <authorList>
            <person name="Hartley M."/>
        </authorList>
    </citation>
    <scope>SEQUENCE REVISION TO 363</scope>
    <source>
        <strain>Sprague-Dawley</strain>
        <tissue>Brain</tissue>
    </source>
</reference>
<reference key="4">
    <citation type="submission" date="2004-03" db="EMBL/GenBank/DDBJ databases">
        <authorList>
            <person name="Groot-Kormelink P.J."/>
        </authorList>
    </citation>
    <scope>NUCLEOTIDE SEQUENCE [MRNA]</scope>
    <source>
        <strain>Sprague-Dawley</strain>
        <tissue>Brain</tissue>
    </source>
</reference>
<reference key="5">
    <citation type="journal article" date="2005" name="J. Biol. Chem.">
        <title>Dual role of the RIC-3 protein in trafficking of serotonin and nicotinic acetylcholine receptors.</title>
        <authorList>
            <person name="Castillo M."/>
            <person name="Mulet J."/>
            <person name="Gutierrez L.M."/>
            <person name="Ortiz J.A."/>
            <person name="Castelan F."/>
            <person name="Gerber S."/>
            <person name="Sala S."/>
            <person name="Sala F."/>
            <person name="Criado M."/>
        </authorList>
    </citation>
    <scope>INTERACTION WITH RIC3</scope>
    <scope>MUTAGENESIS OF LEU-433; LYS-435; VAL-440; ASN-445; ARG-446; PHE-447 AND ARG-448</scope>
    <scope>SUBCELLULAR LOCATION</scope>
</reference>
<reference key="6">
    <citation type="journal article" date="2005" name="Mol. Pharmacol.">
        <title>RIC-3 enhances functional expression of multiple nicotinic acetylcholine receptor subtypes in mammalian cells.</title>
        <authorList>
            <person name="Lansdell S.J."/>
            <person name="Gee V.J."/>
            <person name="Harkness P.C."/>
            <person name="Doward A.I."/>
            <person name="Baker E.R."/>
            <person name="Gibb A.J."/>
            <person name="Millar N.S."/>
        </authorList>
    </citation>
    <scope>INTERACTION WITH RIC3</scope>
</reference>
<reference key="7">
    <citation type="journal article" date="2007" name="J. Immunol.">
        <title>T cells express alpha7-nicotinic acetylcholine receptor subunits that require a functional TCR and leukocyte-specific protein tyrosine kinase for nicotine-induced Ca2+ response.</title>
        <authorList>
            <person name="Razani-Boroujerdi S."/>
            <person name="Boyd R.T."/>
            <person name="Davila-Garcia M.I."/>
            <person name="Nandi J.S."/>
            <person name="Mishra N.C."/>
            <person name="Singh S.P."/>
            <person name="Pena-Philippides J.C."/>
            <person name="Langley R."/>
            <person name="Sopori M.L."/>
        </authorList>
    </citation>
    <scope>FUNCTION</scope>
    <scope>TISSUE SPECIFICITY</scope>
</reference>
<reference key="8">
    <citation type="journal article" date="2007" name="J. Physiol. (Lond.)">
        <title>Dendritic Ca2+ signalling due to activation of alpha 7-containing nicotinic acetylcholine receptors in rat hippocampal neurons.</title>
        <authorList>
            <person name="Fayuk D."/>
            <person name="Yakel J.L."/>
        </authorList>
    </citation>
    <scope>FUNCTION</scope>
    <scope>CATALYTIC ACTIVITY</scope>
    <scope>SUBCELLULAR LOCATION</scope>
    <scope>ACTIVITY REGULATION</scope>
    <scope>TISSUE SPECIFICITY</scope>
</reference>
<reference key="9">
    <citation type="journal article" date="2012" name="J. Physiol. (Lond.)">
        <title>Differential expression and function of nicotinic acetylcholine receptors in the urinary bladder epithelium of the rat.</title>
        <authorList>
            <person name="Beckel J.M."/>
            <person name="Birder L.A."/>
        </authorList>
    </citation>
    <scope>FUNCTION</scope>
    <scope>TISSUE SPECIFICITY</scope>
    <scope>ACTIVITY REGULATION</scope>
</reference>
<reference key="10">
    <citation type="journal article" date="2015" name="Mol. Pharmacol.">
        <title>Molecular interaction of alpha-conotoxin RgIA with the rat alpha9alpha10 nicotinic acetylcholine receptor.</title>
        <authorList>
            <person name="Azam L."/>
            <person name="Papakyriakou A."/>
            <person name="Zouridakis M."/>
            <person name="Giastas P."/>
            <person name="Tzartos S.J."/>
            <person name="McIntosh J.M."/>
        </authorList>
    </citation>
    <scope>MUTAGENESIS OF SER-81 AND LEU-141</scope>
    <scope>ACTIVITY REGULATION</scope>
</reference>
<reference key="11">
    <citation type="journal article" date="2016" name="Mol. Pharmacol.">
        <title>Corrections to 'Molecular interaction of alpha-conotoxin RgIA with the rat alpha9alpha10 nicotinic acetylcholine receptor'.</title>
        <authorList>
            <person name="Azam L."/>
            <person name="Papakyriakou A."/>
            <person name="Zouridakis M."/>
            <person name="Giastas P."/>
            <person name="Tzartos S.J."/>
            <person name="McIntosh J.M."/>
        </authorList>
    </citation>
    <scope>ERRATUM OF PUBMED:25740413</scope>
</reference>
<accession>Q05941</accession>
<accession>Q53YK2</accession>
<keyword id="KW-0106">Calcium</keyword>
<keyword id="KW-1003">Cell membrane</keyword>
<keyword id="KW-1015">Disulfide bond</keyword>
<keyword id="KW-0325">Glycoprotein</keyword>
<keyword id="KW-0407">Ion channel</keyword>
<keyword id="KW-0406">Ion transport</keyword>
<keyword id="KW-1071">Ligand-gated ion channel</keyword>
<keyword id="KW-0472">Membrane</keyword>
<keyword id="KW-0479">Metal-binding</keyword>
<keyword id="KW-0628">Postsynaptic cell membrane</keyword>
<keyword id="KW-0675">Receptor</keyword>
<keyword id="KW-1185">Reference proteome</keyword>
<keyword id="KW-0732">Signal</keyword>
<keyword id="KW-0770">Synapse</keyword>
<keyword id="KW-0812">Transmembrane</keyword>
<keyword id="KW-1133">Transmembrane helix</keyword>
<keyword id="KW-0813">Transport</keyword>